<gene>
    <name evidence="1" type="primary">pepT</name>
    <name type="ordered locus">SACOL0806</name>
</gene>
<organism>
    <name type="scientific">Staphylococcus aureus (strain COL)</name>
    <dbReference type="NCBI Taxonomy" id="93062"/>
    <lineage>
        <taxon>Bacteria</taxon>
        <taxon>Bacillati</taxon>
        <taxon>Bacillota</taxon>
        <taxon>Bacilli</taxon>
        <taxon>Bacillales</taxon>
        <taxon>Staphylococcaceae</taxon>
        <taxon>Staphylococcus</taxon>
    </lineage>
</organism>
<evidence type="ECO:0000255" key="1">
    <source>
        <dbReference type="HAMAP-Rule" id="MF_00550"/>
    </source>
</evidence>
<evidence type="ECO:0000256" key="2">
    <source>
        <dbReference type="SAM" id="MobiDB-lite"/>
    </source>
</evidence>
<protein>
    <recommendedName>
        <fullName evidence="1">Peptidase T</fullName>
        <ecNumber evidence="1">3.4.11.4</ecNumber>
    </recommendedName>
    <alternativeName>
        <fullName evidence="1">Aminotripeptidase</fullName>
        <shortName evidence="1">Tripeptidase</shortName>
    </alternativeName>
    <alternativeName>
        <fullName evidence="1">Tripeptide aminopeptidase</fullName>
    </alternativeName>
</protein>
<sequence>MKNQLIDRLTRYTTIDTQSDPKSTTTPSTEKQWDLLHLLEKELQQLGLPTDLDENGYLFATLESNIDVDVPTVGFLAHVDTSPDFNASNVKPQIIENYDGKPYKLGNTKRVLDPKVFPELNSLVGHTLMVTDGTSLLGADDKAGIVEIMEAICYLQEHPEIKHGTIRIGFTPDEEIGRGPHKFDVDRFNADFAYTMDGSQYGELQYESFNAAEAVITCHGVNVHPGSAKNAMVNAIRLGEQFDSLLPDSEVPERTEGYEGFYHLMNFEGTVEKATLQYIIRDHDKKQFELRKKRILEIRDDINAHFENYPVKVDISDQYFNMAEKILPLPHIIDIPKRVFAKLDIPANTEPIRGGTDGSQLSFMGLPTPNIFTGCGNFHGPYEYASIDVMEKAVQVIIGIVEDIAENH</sequence>
<reference key="1">
    <citation type="journal article" date="2005" name="J. Bacteriol.">
        <title>Insights on evolution of virulence and resistance from the complete genome analysis of an early methicillin-resistant Staphylococcus aureus strain and a biofilm-producing methicillin-resistant Staphylococcus epidermidis strain.</title>
        <authorList>
            <person name="Gill S.R."/>
            <person name="Fouts D.E."/>
            <person name="Archer G.L."/>
            <person name="Mongodin E.F."/>
            <person name="DeBoy R.T."/>
            <person name="Ravel J."/>
            <person name="Paulsen I.T."/>
            <person name="Kolonay J.F."/>
            <person name="Brinkac L.M."/>
            <person name="Beanan M.J."/>
            <person name="Dodson R.J."/>
            <person name="Daugherty S.C."/>
            <person name="Madupu R."/>
            <person name="Angiuoli S.V."/>
            <person name="Durkin A.S."/>
            <person name="Haft D.H."/>
            <person name="Vamathevan J.J."/>
            <person name="Khouri H."/>
            <person name="Utterback T.R."/>
            <person name="Lee C."/>
            <person name="Dimitrov G."/>
            <person name="Jiang L."/>
            <person name="Qin H."/>
            <person name="Weidman J."/>
            <person name="Tran K."/>
            <person name="Kang K.H."/>
            <person name="Hance I.R."/>
            <person name="Nelson K.E."/>
            <person name="Fraser C.M."/>
        </authorList>
    </citation>
    <scope>NUCLEOTIDE SEQUENCE [LARGE SCALE GENOMIC DNA]</scope>
    <source>
        <strain>COL</strain>
    </source>
</reference>
<keyword id="KW-0031">Aminopeptidase</keyword>
<keyword id="KW-0963">Cytoplasm</keyword>
<keyword id="KW-0378">Hydrolase</keyword>
<keyword id="KW-0479">Metal-binding</keyword>
<keyword id="KW-0482">Metalloprotease</keyword>
<keyword id="KW-0645">Protease</keyword>
<keyword id="KW-0862">Zinc</keyword>
<feature type="chain" id="PRO_0000185313" description="Peptidase T">
    <location>
        <begin position="1"/>
        <end position="408"/>
    </location>
</feature>
<feature type="region of interest" description="Disordered" evidence="2">
    <location>
        <begin position="1"/>
        <end position="28"/>
    </location>
</feature>
<feature type="compositionally biased region" description="Polar residues" evidence="2">
    <location>
        <begin position="11"/>
        <end position="28"/>
    </location>
</feature>
<feature type="active site" evidence="1">
    <location>
        <position position="80"/>
    </location>
</feature>
<feature type="active site" description="Proton acceptor" evidence="1">
    <location>
        <position position="174"/>
    </location>
</feature>
<feature type="binding site" evidence="1">
    <location>
        <position position="78"/>
    </location>
    <ligand>
        <name>Zn(2+)</name>
        <dbReference type="ChEBI" id="CHEBI:29105"/>
        <label>1</label>
    </ligand>
</feature>
<feature type="binding site" evidence="1">
    <location>
        <position position="140"/>
    </location>
    <ligand>
        <name>Zn(2+)</name>
        <dbReference type="ChEBI" id="CHEBI:29105"/>
        <label>1</label>
    </ligand>
</feature>
<feature type="binding site" evidence="1">
    <location>
        <position position="140"/>
    </location>
    <ligand>
        <name>Zn(2+)</name>
        <dbReference type="ChEBI" id="CHEBI:29105"/>
        <label>2</label>
    </ligand>
</feature>
<feature type="binding site" evidence="1">
    <location>
        <position position="175"/>
    </location>
    <ligand>
        <name>Zn(2+)</name>
        <dbReference type="ChEBI" id="CHEBI:29105"/>
        <label>2</label>
    </ligand>
</feature>
<feature type="binding site" evidence="1">
    <location>
        <position position="197"/>
    </location>
    <ligand>
        <name>Zn(2+)</name>
        <dbReference type="ChEBI" id="CHEBI:29105"/>
        <label>1</label>
    </ligand>
</feature>
<feature type="binding site" evidence="1">
    <location>
        <position position="379"/>
    </location>
    <ligand>
        <name>Zn(2+)</name>
        <dbReference type="ChEBI" id="CHEBI:29105"/>
        <label>2</label>
    </ligand>
</feature>
<accession>Q5HHS7</accession>
<proteinExistence type="inferred from homology"/>
<name>PEPT_STAAC</name>
<dbReference type="EC" id="3.4.11.4" evidence="1"/>
<dbReference type="EMBL" id="CP000046">
    <property type="protein sequence ID" value="AAW37861.1"/>
    <property type="molecule type" value="Genomic_DNA"/>
</dbReference>
<dbReference type="RefSeq" id="WP_000795826.1">
    <property type="nucleotide sequence ID" value="NZ_JBGOFO010000005.1"/>
</dbReference>
<dbReference type="SMR" id="Q5HHS7"/>
<dbReference type="MEROPS" id="M20.003"/>
<dbReference type="KEGG" id="sac:SACOL0806"/>
<dbReference type="HOGENOM" id="CLU_053676_0_0_9"/>
<dbReference type="Proteomes" id="UP000000530">
    <property type="component" value="Chromosome"/>
</dbReference>
<dbReference type="GO" id="GO:0005829">
    <property type="term" value="C:cytosol"/>
    <property type="evidence" value="ECO:0007669"/>
    <property type="project" value="TreeGrafter"/>
</dbReference>
<dbReference type="GO" id="GO:0008237">
    <property type="term" value="F:metallopeptidase activity"/>
    <property type="evidence" value="ECO:0007669"/>
    <property type="project" value="UniProtKB-KW"/>
</dbReference>
<dbReference type="GO" id="GO:0045148">
    <property type="term" value="F:tripeptide aminopeptidase activity"/>
    <property type="evidence" value="ECO:0007669"/>
    <property type="project" value="UniProtKB-UniRule"/>
</dbReference>
<dbReference type="GO" id="GO:0008270">
    <property type="term" value="F:zinc ion binding"/>
    <property type="evidence" value="ECO:0007669"/>
    <property type="project" value="UniProtKB-UniRule"/>
</dbReference>
<dbReference type="GO" id="GO:0043171">
    <property type="term" value="P:peptide catabolic process"/>
    <property type="evidence" value="ECO:0007669"/>
    <property type="project" value="UniProtKB-UniRule"/>
</dbReference>
<dbReference type="GO" id="GO:0006508">
    <property type="term" value="P:proteolysis"/>
    <property type="evidence" value="ECO:0007669"/>
    <property type="project" value="UniProtKB-UniRule"/>
</dbReference>
<dbReference type="CDD" id="cd03892">
    <property type="entry name" value="M20_peptT"/>
    <property type="match status" value="1"/>
</dbReference>
<dbReference type="FunFam" id="3.30.70.360:FF:000002">
    <property type="entry name" value="Peptidase T"/>
    <property type="match status" value="1"/>
</dbReference>
<dbReference type="Gene3D" id="3.30.70.360">
    <property type="match status" value="1"/>
</dbReference>
<dbReference type="Gene3D" id="3.40.630.10">
    <property type="entry name" value="Zn peptidases"/>
    <property type="match status" value="1"/>
</dbReference>
<dbReference type="HAMAP" id="MF_00550">
    <property type="entry name" value="Aminopeptidase_M20"/>
    <property type="match status" value="1"/>
</dbReference>
<dbReference type="InterPro" id="IPR001261">
    <property type="entry name" value="ArgE/DapE_CS"/>
</dbReference>
<dbReference type="InterPro" id="IPR036264">
    <property type="entry name" value="Bact_exopeptidase_dim_dom"/>
</dbReference>
<dbReference type="InterPro" id="IPR002933">
    <property type="entry name" value="Peptidase_M20"/>
</dbReference>
<dbReference type="InterPro" id="IPR011650">
    <property type="entry name" value="Peptidase_M20_dimer"/>
</dbReference>
<dbReference type="InterPro" id="IPR010161">
    <property type="entry name" value="Peptidase_M20B"/>
</dbReference>
<dbReference type="NCBIfam" id="TIGR01882">
    <property type="entry name" value="peptidase-T"/>
    <property type="match status" value="1"/>
</dbReference>
<dbReference type="NCBIfam" id="NF003976">
    <property type="entry name" value="PRK05469.1"/>
    <property type="match status" value="1"/>
</dbReference>
<dbReference type="NCBIfam" id="NF009920">
    <property type="entry name" value="PRK13381.1"/>
    <property type="match status" value="1"/>
</dbReference>
<dbReference type="PANTHER" id="PTHR42994">
    <property type="entry name" value="PEPTIDASE T"/>
    <property type="match status" value="1"/>
</dbReference>
<dbReference type="PANTHER" id="PTHR42994:SF1">
    <property type="entry name" value="PEPTIDASE T"/>
    <property type="match status" value="1"/>
</dbReference>
<dbReference type="Pfam" id="PF07687">
    <property type="entry name" value="M20_dimer"/>
    <property type="match status" value="1"/>
</dbReference>
<dbReference type="Pfam" id="PF01546">
    <property type="entry name" value="Peptidase_M20"/>
    <property type="match status" value="1"/>
</dbReference>
<dbReference type="PIRSF" id="PIRSF037215">
    <property type="entry name" value="Peptidase_M20B"/>
    <property type="match status" value="1"/>
</dbReference>
<dbReference type="SUPFAM" id="SSF55031">
    <property type="entry name" value="Bacterial exopeptidase dimerisation domain"/>
    <property type="match status" value="1"/>
</dbReference>
<dbReference type="SUPFAM" id="SSF53187">
    <property type="entry name" value="Zn-dependent exopeptidases"/>
    <property type="match status" value="1"/>
</dbReference>
<dbReference type="PROSITE" id="PS00758">
    <property type="entry name" value="ARGE_DAPE_CPG2_1"/>
    <property type="match status" value="1"/>
</dbReference>
<dbReference type="PROSITE" id="PS00759">
    <property type="entry name" value="ARGE_DAPE_CPG2_2"/>
    <property type="match status" value="1"/>
</dbReference>
<comment type="function">
    <text evidence="1">Cleaves the N-terminal amino acid of tripeptides.</text>
</comment>
<comment type="catalytic activity">
    <reaction evidence="1">
        <text>Release of the N-terminal residue from a tripeptide.</text>
        <dbReference type="EC" id="3.4.11.4"/>
    </reaction>
</comment>
<comment type="cofactor">
    <cofactor evidence="1">
        <name>Zn(2+)</name>
        <dbReference type="ChEBI" id="CHEBI:29105"/>
    </cofactor>
    <text evidence="1">Binds 2 Zn(2+) ions per subunit.</text>
</comment>
<comment type="subcellular location">
    <subcellularLocation>
        <location evidence="1">Cytoplasm</location>
    </subcellularLocation>
</comment>
<comment type="similarity">
    <text evidence="1">Belongs to the peptidase M20B family.</text>
</comment>